<protein>
    <recommendedName>
        <fullName>P2X purinoceptor 3</fullName>
        <shortName>P2X3</shortName>
    </recommendedName>
    <alternativeName>
        <fullName>ATP receptor</fullName>
    </alternativeName>
    <alternativeName>
        <fullName>Purinergic receptor</fullName>
    </alternativeName>
</protein>
<organism>
    <name type="scientific">Mus musculus</name>
    <name type="common">Mouse</name>
    <dbReference type="NCBI Taxonomy" id="10090"/>
    <lineage>
        <taxon>Eukaryota</taxon>
        <taxon>Metazoa</taxon>
        <taxon>Chordata</taxon>
        <taxon>Craniata</taxon>
        <taxon>Vertebrata</taxon>
        <taxon>Euteleostomi</taxon>
        <taxon>Mammalia</taxon>
        <taxon>Eutheria</taxon>
        <taxon>Euarchontoglires</taxon>
        <taxon>Glires</taxon>
        <taxon>Rodentia</taxon>
        <taxon>Myomorpha</taxon>
        <taxon>Muroidea</taxon>
        <taxon>Muridae</taxon>
        <taxon>Murinae</taxon>
        <taxon>Mus</taxon>
        <taxon>Mus</taxon>
    </lineage>
</organism>
<accession>Q3UR32</accession>
<accession>A2AW02</accession>
<accession>Q8R1U4</accession>
<keyword id="KW-0067">ATP-binding</keyword>
<keyword id="KW-0106">Calcium</keyword>
<keyword id="KW-1003">Cell membrane</keyword>
<keyword id="KW-1015">Disulfide bond</keyword>
<keyword id="KW-0325">Glycoprotein</keyword>
<keyword id="KW-0407">Ion channel</keyword>
<keyword id="KW-0406">Ion transport</keyword>
<keyword id="KW-1071">Ligand-gated ion channel</keyword>
<keyword id="KW-0460">Magnesium</keyword>
<keyword id="KW-0472">Membrane</keyword>
<keyword id="KW-0479">Metal-binding</keyword>
<keyword id="KW-0547">Nucleotide-binding</keyword>
<keyword id="KW-0675">Receptor</keyword>
<keyword id="KW-1185">Reference proteome</keyword>
<keyword id="KW-0812">Transmembrane</keyword>
<keyword id="KW-1133">Transmembrane helix</keyword>
<keyword id="KW-0813">Transport</keyword>
<proteinExistence type="evidence at transcript level"/>
<evidence type="ECO:0000250" key="1">
    <source>
        <dbReference type="UniProtKB" id="P49654"/>
    </source>
</evidence>
<evidence type="ECO:0000250" key="2">
    <source>
        <dbReference type="UniProtKB" id="P56373"/>
    </source>
</evidence>
<evidence type="ECO:0000269" key="3">
    <source>
    </source>
</evidence>
<evidence type="ECO:0000269" key="4">
    <source>
    </source>
</evidence>
<evidence type="ECO:0000269" key="5">
    <source>
    </source>
</evidence>
<evidence type="ECO:0000269" key="6">
    <source>
    </source>
</evidence>
<evidence type="ECO:0000305" key="7"/>
<feature type="chain" id="PRO_0000269195" description="P2X purinoceptor 3">
    <location>
        <begin position="1"/>
        <end position="397"/>
    </location>
</feature>
<feature type="topological domain" description="Cytoplasmic" evidence="7">
    <location>
        <begin position="1"/>
        <end position="20"/>
    </location>
</feature>
<feature type="transmembrane region" description="Helical; Name=1" evidence="2">
    <location>
        <begin position="21"/>
        <end position="43"/>
    </location>
</feature>
<feature type="topological domain" description="Extracellular" evidence="7">
    <location>
        <begin position="44"/>
        <end position="322"/>
    </location>
</feature>
<feature type="transmembrane region" description="Helical; Name=2" evidence="2">
    <location>
        <begin position="323"/>
        <end position="341"/>
    </location>
</feature>
<feature type="topological domain" description="Cytoplasmic" evidence="7">
    <location>
        <begin position="342"/>
        <end position="397"/>
    </location>
</feature>
<feature type="binding site" evidence="2">
    <location>
        <position position="63"/>
    </location>
    <ligand>
        <name>ATP</name>
        <dbReference type="ChEBI" id="CHEBI:30616"/>
        <note>ligand shared between two neighboring subunits of the homotrimer</note>
    </ligand>
</feature>
<feature type="binding site" evidence="2">
    <location>
        <position position="65"/>
    </location>
    <ligand>
        <name>ATP</name>
        <dbReference type="ChEBI" id="CHEBI:30616"/>
        <note>ligand shared between two neighboring subunits of the homotrimer</note>
    </ligand>
</feature>
<feature type="binding site" evidence="2">
    <location>
        <position position="111"/>
    </location>
    <ligand>
        <name>Mg(2+)</name>
        <dbReference type="ChEBI" id="CHEBI:18420"/>
    </ligand>
</feature>
<feature type="binding site" evidence="2">
    <location>
        <position position="158"/>
    </location>
    <ligand>
        <name>Ca(2+)</name>
        <dbReference type="ChEBI" id="CHEBI:29108"/>
    </ligand>
</feature>
<feature type="binding site" evidence="2">
    <location>
        <position position="158"/>
    </location>
    <ligand>
        <name>Mg(2+)</name>
        <dbReference type="ChEBI" id="CHEBI:18420"/>
    </ligand>
</feature>
<feature type="binding site" evidence="2">
    <location>
        <position position="172"/>
    </location>
    <ligand>
        <name>ATP</name>
        <dbReference type="ChEBI" id="CHEBI:30616"/>
        <note>ligand shared between two neighboring subunits of the homotrimer</note>
    </ligand>
</feature>
<feature type="binding site" evidence="2">
    <location>
        <position position="275"/>
    </location>
    <ligand>
        <name>ATP</name>
        <dbReference type="ChEBI" id="CHEBI:30616"/>
        <note>ligand shared between two neighboring subunits of the homotrimer</note>
    </ligand>
</feature>
<feature type="binding site" evidence="2">
    <location>
        <position position="279"/>
    </location>
    <ligand>
        <name>ATP</name>
        <dbReference type="ChEBI" id="CHEBI:30616"/>
        <note>ligand shared between two neighboring subunits of the homotrimer</note>
    </ligand>
</feature>
<feature type="binding site" evidence="2">
    <location>
        <position position="281"/>
    </location>
    <ligand>
        <name>ATP</name>
        <dbReference type="ChEBI" id="CHEBI:30616"/>
        <note>ligand shared between two neighboring subunits of the homotrimer</note>
    </ligand>
</feature>
<feature type="binding site" evidence="2">
    <location>
        <position position="299"/>
    </location>
    <ligand>
        <name>ATP</name>
        <dbReference type="ChEBI" id="CHEBI:30616"/>
        <note>ligand shared between two neighboring subunits of the homotrimer</note>
    </ligand>
</feature>
<feature type="glycosylation site" description="N-linked (GlcNAc...) asparagine" evidence="2">
    <location>
        <position position="139"/>
    </location>
</feature>
<feature type="glycosylation site" description="N-linked (GlcNAc...) asparagine" evidence="2">
    <location>
        <position position="170"/>
    </location>
</feature>
<feature type="glycosylation site" description="N-linked (GlcNAc...) asparagine" evidence="2">
    <location>
        <position position="194"/>
    </location>
</feature>
<feature type="glycosylation site" description="N-linked (GlcNAc...) asparagine" evidence="2">
    <location>
        <position position="290"/>
    </location>
</feature>
<feature type="disulfide bond" evidence="2">
    <location>
        <begin position="107"/>
        <end position="153"/>
    </location>
</feature>
<feature type="disulfide bond" evidence="2">
    <location>
        <begin position="116"/>
        <end position="137"/>
    </location>
</feature>
<feature type="disulfide bond" evidence="2">
    <location>
        <begin position="122"/>
        <end position="147"/>
    </location>
</feature>
<feature type="disulfide bond" evidence="2">
    <location>
        <begin position="203"/>
        <end position="213"/>
    </location>
</feature>
<feature type="disulfide bond" evidence="2">
    <location>
        <begin position="247"/>
        <end position="256"/>
    </location>
</feature>
<feature type="sequence conflict" description="In Ref. 3; AAH23089." evidence="7" ref="3">
    <original>R</original>
    <variation>P</variation>
    <location>
        <position position="295"/>
    </location>
</feature>
<reference key="1">
    <citation type="journal article" date="2005" name="Science">
        <title>The transcriptional landscape of the mammalian genome.</title>
        <authorList>
            <person name="Carninci P."/>
            <person name="Kasukawa T."/>
            <person name="Katayama S."/>
            <person name="Gough J."/>
            <person name="Frith M.C."/>
            <person name="Maeda N."/>
            <person name="Oyama R."/>
            <person name="Ravasi T."/>
            <person name="Lenhard B."/>
            <person name="Wells C."/>
            <person name="Kodzius R."/>
            <person name="Shimokawa K."/>
            <person name="Bajic V.B."/>
            <person name="Brenner S.E."/>
            <person name="Batalov S."/>
            <person name="Forrest A.R."/>
            <person name="Zavolan M."/>
            <person name="Davis M.J."/>
            <person name="Wilming L.G."/>
            <person name="Aidinis V."/>
            <person name="Allen J.E."/>
            <person name="Ambesi-Impiombato A."/>
            <person name="Apweiler R."/>
            <person name="Aturaliya R.N."/>
            <person name="Bailey T.L."/>
            <person name="Bansal M."/>
            <person name="Baxter L."/>
            <person name="Beisel K.W."/>
            <person name="Bersano T."/>
            <person name="Bono H."/>
            <person name="Chalk A.M."/>
            <person name="Chiu K.P."/>
            <person name="Choudhary V."/>
            <person name="Christoffels A."/>
            <person name="Clutterbuck D.R."/>
            <person name="Crowe M.L."/>
            <person name="Dalla E."/>
            <person name="Dalrymple B.P."/>
            <person name="de Bono B."/>
            <person name="Della Gatta G."/>
            <person name="di Bernardo D."/>
            <person name="Down T."/>
            <person name="Engstrom P."/>
            <person name="Fagiolini M."/>
            <person name="Faulkner G."/>
            <person name="Fletcher C.F."/>
            <person name="Fukushima T."/>
            <person name="Furuno M."/>
            <person name="Futaki S."/>
            <person name="Gariboldi M."/>
            <person name="Georgii-Hemming P."/>
            <person name="Gingeras T.R."/>
            <person name="Gojobori T."/>
            <person name="Green R.E."/>
            <person name="Gustincich S."/>
            <person name="Harbers M."/>
            <person name="Hayashi Y."/>
            <person name="Hensch T.K."/>
            <person name="Hirokawa N."/>
            <person name="Hill D."/>
            <person name="Huminiecki L."/>
            <person name="Iacono M."/>
            <person name="Ikeo K."/>
            <person name="Iwama A."/>
            <person name="Ishikawa T."/>
            <person name="Jakt M."/>
            <person name="Kanapin A."/>
            <person name="Katoh M."/>
            <person name="Kawasawa Y."/>
            <person name="Kelso J."/>
            <person name="Kitamura H."/>
            <person name="Kitano H."/>
            <person name="Kollias G."/>
            <person name="Krishnan S.P."/>
            <person name="Kruger A."/>
            <person name="Kummerfeld S.K."/>
            <person name="Kurochkin I.V."/>
            <person name="Lareau L.F."/>
            <person name="Lazarevic D."/>
            <person name="Lipovich L."/>
            <person name="Liu J."/>
            <person name="Liuni S."/>
            <person name="McWilliam S."/>
            <person name="Madan Babu M."/>
            <person name="Madera M."/>
            <person name="Marchionni L."/>
            <person name="Matsuda H."/>
            <person name="Matsuzawa S."/>
            <person name="Miki H."/>
            <person name="Mignone F."/>
            <person name="Miyake S."/>
            <person name="Morris K."/>
            <person name="Mottagui-Tabar S."/>
            <person name="Mulder N."/>
            <person name="Nakano N."/>
            <person name="Nakauchi H."/>
            <person name="Ng P."/>
            <person name="Nilsson R."/>
            <person name="Nishiguchi S."/>
            <person name="Nishikawa S."/>
            <person name="Nori F."/>
            <person name="Ohara O."/>
            <person name="Okazaki Y."/>
            <person name="Orlando V."/>
            <person name="Pang K.C."/>
            <person name="Pavan W.J."/>
            <person name="Pavesi G."/>
            <person name="Pesole G."/>
            <person name="Petrovsky N."/>
            <person name="Piazza S."/>
            <person name="Reed J."/>
            <person name="Reid J.F."/>
            <person name="Ring B.Z."/>
            <person name="Ringwald M."/>
            <person name="Rost B."/>
            <person name="Ruan Y."/>
            <person name="Salzberg S.L."/>
            <person name="Sandelin A."/>
            <person name="Schneider C."/>
            <person name="Schoenbach C."/>
            <person name="Sekiguchi K."/>
            <person name="Semple C.A."/>
            <person name="Seno S."/>
            <person name="Sessa L."/>
            <person name="Sheng Y."/>
            <person name="Shibata Y."/>
            <person name="Shimada H."/>
            <person name="Shimada K."/>
            <person name="Silva D."/>
            <person name="Sinclair B."/>
            <person name="Sperling S."/>
            <person name="Stupka E."/>
            <person name="Sugiura K."/>
            <person name="Sultana R."/>
            <person name="Takenaka Y."/>
            <person name="Taki K."/>
            <person name="Tammoja K."/>
            <person name="Tan S.L."/>
            <person name="Tang S."/>
            <person name="Taylor M.S."/>
            <person name="Tegner J."/>
            <person name="Teichmann S.A."/>
            <person name="Ueda H.R."/>
            <person name="van Nimwegen E."/>
            <person name="Verardo R."/>
            <person name="Wei C.L."/>
            <person name="Yagi K."/>
            <person name="Yamanishi H."/>
            <person name="Zabarovsky E."/>
            <person name="Zhu S."/>
            <person name="Zimmer A."/>
            <person name="Hide W."/>
            <person name="Bult C."/>
            <person name="Grimmond S.M."/>
            <person name="Teasdale R.D."/>
            <person name="Liu E.T."/>
            <person name="Brusic V."/>
            <person name="Quackenbush J."/>
            <person name="Wahlestedt C."/>
            <person name="Mattick J.S."/>
            <person name="Hume D.A."/>
            <person name="Kai C."/>
            <person name="Sasaki D."/>
            <person name="Tomaru Y."/>
            <person name="Fukuda S."/>
            <person name="Kanamori-Katayama M."/>
            <person name="Suzuki M."/>
            <person name="Aoki J."/>
            <person name="Arakawa T."/>
            <person name="Iida J."/>
            <person name="Imamura K."/>
            <person name="Itoh M."/>
            <person name="Kato T."/>
            <person name="Kawaji H."/>
            <person name="Kawagashira N."/>
            <person name="Kawashima T."/>
            <person name="Kojima M."/>
            <person name="Kondo S."/>
            <person name="Konno H."/>
            <person name="Nakano K."/>
            <person name="Ninomiya N."/>
            <person name="Nishio T."/>
            <person name="Okada M."/>
            <person name="Plessy C."/>
            <person name="Shibata K."/>
            <person name="Shiraki T."/>
            <person name="Suzuki S."/>
            <person name="Tagami M."/>
            <person name="Waki K."/>
            <person name="Watahiki A."/>
            <person name="Okamura-Oho Y."/>
            <person name="Suzuki H."/>
            <person name="Kawai J."/>
            <person name="Hayashizaki Y."/>
        </authorList>
    </citation>
    <scope>NUCLEOTIDE SEQUENCE [LARGE SCALE MRNA]</scope>
    <source>
        <strain>C57BL/6J</strain>
        <tissue>Corpora quadrigemina</tissue>
        <tissue>Spinal ganglion</tissue>
    </source>
</reference>
<reference key="2">
    <citation type="journal article" date="2009" name="PLoS Biol.">
        <title>Lineage-specific biology revealed by a finished genome assembly of the mouse.</title>
        <authorList>
            <person name="Church D.M."/>
            <person name="Goodstadt L."/>
            <person name="Hillier L.W."/>
            <person name="Zody M.C."/>
            <person name="Goldstein S."/>
            <person name="She X."/>
            <person name="Bult C.J."/>
            <person name="Agarwala R."/>
            <person name="Cherry J.L."/>
            <person name="DiCuccio M."/>
            <person name="Hlavina W."/>
            <person name="Kapustin Y."/>
            <person name="Meric P."/>
            <person name="Maglott D."/>
            <person name="Birtle Z."/>
            <person name="Marques A.C."/>
            <person name="Graves T."/>
            <person name="Zhou S."/>
            <person name="Teague B."/>
            <person name="Potamousis K."/>
            <person name="Churas C."/>
            <person name="Place M."/>
            <person name="Herschleb J."/>
            <person name="Runnheim R."/>
            <person name="Forrest D."/>
            <person name="Amos-Landgraf J."/>
            <person name="Schwartz D.C."/>
            <person name="Cheng Z."/>
            <person name="Lindblad-Toh K."/>
            <person name="Eichler E.E."/>
            <person name="Ponting C.P."/>
        </authorList>
    </citation>
    <scope>NUCLEOTIDE SEQUENCE [LARGE SCALE GENOMIC DNA]</scope>
    <source>
        <strain>C57BL/6J</strain>
    </source>
</reference>
<reference key="3">
    <citation type="journal article" date="2004" name="Genome Res.">
        <title>The status, quality, and expansion of the NIH full-length cDNA project: the Mammalian Gene Collection (MGC).</title>
        <authorList>
            <consortium name="The MGC Project Team"/>
        </authorList>
    </citation>
    <scope>NUCLEOTIDE SEQUENCE [LARGE SCALE MRNA]</scope>
    <source>
        <strain>FVB/N</strain>
        <tissue>Mammary tumor</tissue>
    </source>
</reference>
<reference key="4">
    <citation type="journal article" date="2000" name="Nature">
        <title>Urinary bladder hyporeflexia and reduced pain-related behaviour in P2X3-deficient mice.</title>
        <authorList>
            <person name="Cockayne D.A."/>
            <person name="Hamilton S.G."/>
            <person name="Zhu Q.M."/>
            <person name="Dunn P.M."/>
            <person name="Zhong Y."/>
            <person name="Novakovic S."/>
            <person name="Malmberg A.B."/>
            <person name="Cain G."/>
            <person name="Berson A."/>
            <person name="Kassotakis L."/>
            <person name="Hedley L."/>
            <person name="Lachnit W.G."/>
            <person name="Burnstock G."/>
            <person name="McMahon S.B."/>
            <person name="Ford A.P."/>
        </authorList>
    </citation>
    <scope>FUNCTION</scope>
    <scope>DISRUPTION PHENOTYPE</scope>
</reference>
<reference key="5">
    <citation type="journal article" date="2001" name="J. Neurosci.">
        <title>P2X3 knock-out mice reveal a major sensory role for urothelially released ATP.</title>
        <authorList>
            <person name="Vlaskovska M."/>
            <person name="Kasakov L."/>
            <person name="Rong W."/>
            <person name="Bodin P."/>
            <person name="Bardini M."/>
            <person name="Cockayne D.A."/>
            <person name="Ford A.P."/>
            <person name="Burnstock G."/>
        </authorList>
    </citation>
    <scope>FUNCTION</scope>
    <scope>DISRUPTION PHENOTYPE</scope>
</reference>
<reference key="6">
    <citation type="journal article" date="2005" name="J. Physiol. (Lond.)">
        <title>P2X2 knockout mice and P2X2/P2X3 double knockout mice reveal a role for the P2X2 receptor subunit in mediating multiple sensory effects of ATP.</title>
        <authorList>
            <person name="Cockayne D.A."/>
            <person name="Dunn P.M."/>
            <person name="Zhong Y."/>
            <person name="Rong W."/>
            <person name="Hamilton S.G."/>
            <person name="Knight G.E."/>
            <person name="Ruan H.Z."/>
            <person name="Ma B."/>
            <person name="Yip P."/>
            <person name="Nunn P."/>
            <person name="McMahon S.B."/>
            <person name="Burnstock G."/>
            <person name="Ford A.P."/>
        </authorList>
    </citation>
    <scope>FUNCTION</scope>
    <scope>DISRUPTION PHENOTYPE</scope>
</reference>
<reference key="7">
    <citation type="journal article" date="2005" name="Science">
        <title>ATP signaling is crucial for communication from taste buds to gustatory nerves.</title>
        <authorList>
            <person name="Finger T.E."/>
            <person name="Danilova V."/>
            <person name="Barrows J."/>
            <person name="Bartel D.L."/>
            <person name="Vigers A.J."/>
            <person name="Stone L."/>
            <person name="Hellekant G."/>
            <person name="Kinnamon S.C."/>
        </authorList>
    </citation>
    <scope>DISRUPTION PHENOTYPE</scope>
    <scope>FUNCTION</scope>
</reference>
<name>P2RX3_MOUSE</name>
<gene>
    <name type="primary">P2rx3</name>
</gene>
<dbReference type="EMBL" id="AK140283">
    <property type="protein sequence ID" value="BAE24316.1"/>
    <property type="molecule type" value="mRNA"/>
</dbReference>
<dbReference type="EMBL" id="AK141847">
    <property type="protein sequence ID" value="BAE24856.1"/>
    <property type="molecule type" value="mRNA"/>
</dbReference>
<dbReference type="EMBL" id="AL935159">
    <property type="status" value="NOT_ANNOTATED_CDS"/>
    <property type="molecule type" value="Genomic_DNA"/>
</dbReference>
<dbReference type="EMBL" id="BC023089">
    <property type="protein sequence ID" value="AAH23089.1"/>
    <property type="molecule type" value="mRNA"/>
</dbReference>
<dbReference type="CCDS" id="CCDS16200.1"/>
<dbReference type="RefSeq" id="NP_663501.2">
    <property type="nucleotide sequence ID" value="NM_145526.3"/>
</dbReference>
<dbReference type="SMR" id="Q3UR32"/>
<dbReference type="BioGRID" id="230717">
    <property type="interactions" value="1"/>
</dbReference>
<dbReference type="FunCoup" id="Q3UR32">
    <property type="interactions" value="618"/>
</dbReference>
<dbReference type="STRING" id="10090.ENSMUSP00000028465"/>
<dbReference type="BindingDB" id="Q3UR32"/>
<dbReference type="ChEMBL" id="CHEMBL2401608"/>
<dbReference type="GlyCosmos" id="Q3UR32">
    <property type="glycosylation" value="4 sites, No reported glycans"/>
</dbReference>
<dbReference type="GlyGen" id="Q3UR32">
    <property type="glycosylation" value="5 sites, 3 N-linked glycans (3 sites)"/>
</dbReference>
<dbReference type="iPTMnet" id="Q3UR32"/>
<dbReference type="PhosphoSitePlus" id="Q3UR32"/>
<dbReference type="jPOST" id="Q3UR32"/>
<dbReference type="PaxDb" id="10090-ENSMUSP00000028465"/>
<dbReference type="Antibodypedia" id="14096">
    <property type="antibodies" value="254 antibodies from 31 providers"/>
</dbReference>
<dbReference type="DNASU" id="228139"/>
<dbReference type="Ensembl" id="ENSMUST00000028465.14">
    <property type="protein sequence ID" value="ENSMUSP00000028465.8"/>
    <property type="gene ID" value="ENSMUSG00000027071.15"/>
</dbReference>
<dbReference type="GeneID" id="228139"/>
<dbReference type="KEGG" id="mmu:228139"/>
<dbReference type="UCSC" id="uc008kjr.1">
    <property type="organism name" value="mouse"/>
</dbReference>
<dbReference type="AGR" id="MGI:1097160"/>
<dbReference type="CTD" id="5024"/>
<dbReference type="MGI" id="MGI:1097160">
    <property type="gene designation" value="P2rx3"/>
</dbReference>
<dbReference type="VEuPathDB" id="HostDB:ENSMUSG00000027071"/>
<dbReference type="eggNOG" id="ENOG502QUDE">
    <property type="taxonomic scope" value="Eukaryota"/>
</dbReference>
<dbReference type="GeneTree" id="ENSGT01020000230351"/>
<dbReference type="InParanoid" id="Q3UR32"/>
<dbReference type="OMA" id="GRCEEKQ"/>
<dbReference type="OrthoDB" id="494673at2759"/>
<dbReference type="PhylomeDB" id="Q3UR32"/>
<dbReference type="TreeFam" id="TF328633"/>
<dbReference type="Reactome" id="R-MMU-139853">
    <property type="pathway name" value="Elevation of cytosolic Ca2+ levels"/>
</dbReference>
<dbReference type="Reactome" id="R-MMU-418346">
    <property type="pathway name" value="Platelet homeostasis"/>
</dbReference>
<dbReference type="BioGRID-ORCS" id="228139">
    <property type="hits" value="0 hits in 76 CRISPR screens"/>
</dbReference>
<dbReference type="ChiTaRS" id="P2rx3">
    <property type="organism name" value="mouse"/>
</dbReference>
<dbReference type="PRO" id="PR:Q3UR32"/>
<dbReference type="Proteomes" id="UP000000589">
    <property type="component" value="Chromosome 2"/>
</dbReference>
<dbReference type="RNAct" id="Q3UR32">
    <property type="molecule type" value="protein"/>
</dbReference>
<dbReference type="Bgee" id="ENSMUSG00000027071">
    <property type="expression patterns" value="Expressed in lumbar dorsal root ganglion and 61 other cell types or tissues"/>
</dbReference>
<dbReference type="ExpressionAtlas" id="Q3UR32">
    <property type="expression patterns" value="baseline and differential"/>
</dbReference>
<dbReference type="GO" id="GO:0030424">
    <property type="term" value="C:axon"/>
    <property type="evidence" value="ECO:0000314"/>
    <property type="project" value="MGI"/>
</dbReference>
<dbReference type="GO" id="GO:0098686">
    <property type="term" value="C:hippocampal mossy fiber to CA3 synapse"/>
    <property type="evidence" value="ECO:0000314"/>
    <property type="project" value="SynGO"/>
</dbReference>
<dbReference type="GO" id="GO:0043005">
    <property type="term" value="C:neuron projection"/>
    <property type="evidence" value="ECO:0000314"/>
    <property type="project" value="MGI"/>
</dbReference>
<dbReference type="GO" id="GO:0005886">
    <property type="term" value="C:plasma membrane"/>
    <property type="evidence" value="ECO:0000250"/>
    <property type="project" value="UniProtKB"/>
</dbReference>
<dbReference type="GO" id="GO:0098794">
    <property type="term" value="C:postsynapse"/>
    <property type="evidence" value="ECO:0007669"/>
    <property type="project" value="GOC"/>
</dbReference>
<dbReference type="GO" id="GO:0043235">
    <property type="term" value="C:receptor complex"/>
    <property type="evidence" value="ECO:0000266"/>
    <property type="project" value="MGI"/>
</dbReference>
<dbReference type="GO" id="GO:0098685">
    <property type="term" value="C:Schaffer collateral - CA1 synapse"/>
    <property type="evidence" value="ECO:0000314"/>
    <property type="project" value="SynGO"/>
</dbReference>
<dbReference type="GO" id="GO:0005524">
    <property type="term" value="F:ATP binding"/>
    <property type="evidence" value="ECO:0000250"/>
    <property type="project" value="UniProtKB"/>
</dbReference>
<dbReference type="GO" id="GO:0004931">
    <property type="term" value="F:extracellularly ATP-gated monoatomic cation channel activity"/>
    <property type="evidence" value="ECO:0000316"/>
    <property type="project" value="MGI"/>
</dbReference>
<dbReference type="GO" id="GO:0046872">
    <property type="term" value="F:metal ion binding"/>
    <property type="evidence" value="ECO:0007669"/>
    <property type="project" value="UniProtKB-KW"/>
</dbReference>
<dbReference type="GO" id="GO:0001614">
    <property type="term" value="F:purinergic nucleotide receptor activity"/>
    <property type="evidence" value="ECO:0000250"/>
    <property type="project" value="UniProtKB"/>
</dbReference>
<dbReference type="GO" id="GO:0048266">
    <property type="term" value="P:behavioral response to pain"/>
    <property type="evidence" value="ECO:0000315"/>
    <property type="project" value="MGI"/>
</dbReference>
<dbReference type="GO" id="GO:0070588">
    <property type="term" value="P:calcium ion transmembrane transport"/>
    <property type="evidence" value="ECO:0000250"/>
    <property type="project" value="UniProtKB"/>
</dbReference>
<dbReference type="GO" id="GO:0071318">
    <property type="term" value="P:cellular response to ATP"/>
    <property type="evidence" value="ECO:0000250"/>
    <property type="project" value="UniProtKB"/>
</dbReference>
<dbReference type="GO" id="GO:0007268">
    <property type="term" value="P:chemical synaptic transmission"/>
    <property type="evidence" value="ECO:0000315"/>
    <property type="project" value="MGI"/>
</dbReference>
<dbReference type="GO" id="GO:0051649">
    <property type="term" value="P:establishment of localization in cell"/>
    <property type="evidence" value="ECO:0000315"/>
    <property type="project" value="MGI"/>
</dbReference>
<dbReference type="GO" id="GO:0098662">
    <property type="term" value="P:inorganic cation transmembrane transport"/>
    <property type="evidence" value="ECO:0000250"/>
    <property type="project" value="UniProtKB"/>
</dbReference>
<dbReference type="GO" id="GO:0050804">
    <property type="term" value="P:modulation of chemical synaptic transmission"/>
    <property type="evidence" value="ECO:0000314"/>
    <property type="project" value="SynGO"/>
</dbReference>
<dbReference type="GO" id="GO:0006812">
    <property type="term" value="P:monoatomic cation transport"/>
    <property type="evidence" value="ECO:0000315"/>
    <property type="project" value="MGI"/>
</dbReference>
<dbReference type="GO" id="GO:0006811">
    <property type="term" value="P:monoatomic ion transport"/>
    <property type="evidence" value="ECO:0000315"/>
    <property type="project" value="MGI"/>
</dbReference>
<dbReference type="GO" id="GO:0007274">
    <property type="term" value="P:neuromuscular synaptic transmission"/>
    <property type="evidence" value="ECO:0000315"/>
    <property type="project" value="MGI"/>
</dbReference>
<dbReference type="GO" id="GO:0030432">
    <property type="term" value="P:peristalsis"/>
    <property type="evidence" value="ECO:0000315"/>
    <property type="project" value="MGI"/>
</dbReference>
<dbReference type="GO" id="GO:0070207">
    <property type="term" value="P:protein homotrimerization"/>
    <property type="evidence" value="ECO:0000250"/>
    <property type="project" value="UniProtKB"/>
</dbReference>
<dbReference type="GO" id="GO:0048167">
    <property type="term" value="P:regulation of synaptic plasticity"/>
    <property type="evidence" value="ECO:0000315"/>
    <property type="project" value="MGI"/>
</dbReference>
<dbReference type="GO" id="GO:0033198">
    <property type="term" value="P:response to ATP"/>
    <property type="evidence" value="ECO:0000315"/>
    <property type="project" value="MGI"/>
</dbReference>
<dbReference type="GO" id="GO:0009743">
    <property type="term" value="P:response to carbohydrate"/>
    <property type="evidence" value="ECO:0000315"/>
    <property type="project" value="MGI"/>
</dbReference>
<dbReference type="GO" id="GO:0009409">
    <property type="term" value="P:response to cold"/>
    <property type="evidence" value="ECO:0000315"/>
    <property type="project" value="MGI"/>
</dbReference>
<dbReference type="GO" id="GO:0009408">
    <property type="term" value="P:response to heat"/>
    <property type="evidence" value="ECO:0000315"/>
    <property type="project" value="MGI"/>
</dbReference>
<dbReference type="GO" id="GO:0001666">
    <property type="term" value="P:response to hypoxia"/>
    <property type="evidence" value="ECO:0000315"/>
    <property type="project" value="MGI"/>
</dbReference>
<dbReference type="GO" id="GO:0009612">
    <property type="term" value="P:response to mechanical stimulus"/>
    <property type="evidence" value="ECO:0000315"/>
    <property type="project" value="MGI"/>
</dbReference>
<dbReference type="GO" id="GO:0009266">
    <property type="term" value="P:response to temperature stimulus"/>
    <property type="evidence" value="ECO:0000315"/>
    <property type="project" value="MGI"/>
</dbReference>
<dbReference type="GO" id="GO:0050909">
    <property type="term" value="P:sensory perception of taste"/>
    <property type="evidence" value="ECO:0000316"/>
    <property type="project" value="MGI"/>
</dbReference>
<dbReference type="GO" id="GO:0014832">
    <property type="term" value="P:urinary bladder smooth muscle contraction"/>
    <property type="evidence" value="ECO:0000315"/>
    <property type="project" value="MGI"/>
</dbReference>
<dbReference type="FunFam" id="2.60.490.10:FF:000001">
    <property type="entry name" value="P2X purinoceptor"/>
    <property type="match status" value="1"/>
</dbReference>
<dbReference type="FunFam" id="1.10.287.940:FF:000010">
    <property type="entry name" value="P2X receptor E"/>
    <property type="match status" value="1"/>
</dbReference>
<dbReference type="Gene3D" id="1.10.287.940">
    <property type="entry name" value="atp-gated p2x4 ion channel"/>
    <property type="match status" value="1"/>
</dbReference>
<dbReference type="Gene3D" id="2.60.490.10">
    <property type="entry name" value="atp-gated p2x4 ion channel domain"/>
    <property type="match status" value="1"/>
</dbReference>
<dbReference type="InterPro" id="IPR003046">
    <property type="entry name" value="P2X3_purnocptor"/>
</dbReference>
<dbReference type="InterPro" id="IPR027309">
    <property type="entry name" value="P2X_extracellular_dom_sf"/>
</dbReference>
<dbReference type="InterPro" id="IPR001429">
    <property type="entry name" value="P2X_purnocptor"/>
</dbReference>
<dbReference type="InterPro" id="IPR053792">
    <property type="entry name" value="P2X_RECEPTOR_CS"/>
</dbReference>
<dbReference type="NCBIfam" id="TIGR00863">
    <property type="entry name" value="P2X"/>
    <property type="match status" value="1"/>
</dbReference>
<dbReference type="PANTHER" id="PTHR10125">
    <property type="entry name" value="P2X PURINOCEPTOR"/>
    <property type="match status" value="1"/>
</dbReference>
<dbReference type="PANTHER" id="PTHR10125:SF8">
    <property type="entry name" value="P2X PURINOCEPTOR 3"/>
    <property type="match status" value="1"/>
</dbReference>
<dbReference type="Pfam" id="PF00864">
    <property type="entry name" value="P2X_receptor"/>
    <property type="match status" value="1"/>
</dbReference>
<dbReference type="PIRSF" id="PIRSF005713">
    <property type="entry name" value="P2X_purinoceptor"/>
    <property type="match status" value="1"/>
</dbReference>
<dbReference type="PRINTS" id="PR01310">
    <property type="entry name" value="P2X3RECEPTOR"/>
</dbReference>
<dbReference type="PRINTS" id="PR01307">
    <property type="entry name" value="P2XRECEPTOR"/>
</dbReference>
<dbReference type="PROSITE" id="PS01212">
    <property type="entry name" value="P2X_RECEPTOR"/>
    <property type="match status" value="1"/>
</dbReference>
<comment type="function">
    <text evidence="2 3 4 5 6">Extracellular ATP-activated non-selective cation channel (By similarity). Plays particularly important role in sensory neurons where its activation is critical for gustatory, nociceptive responses, visceral reflexes and sensory hypersensitization (PubMed:11069181, PubMed:11466438, PubMed:15961431, PubMed:16322458).</text>
</comment>
<comment type="catalytic activity">
    <reaction evidence="2">
        <text>Ca(2+)(in) = Ca(2+)(out)</text>
        <dbReference type="Rhea" id="RHEA:29671"/>
        <dbReference type="ChEBI" id="CHEBI:29108"/>
    </reaction>
</comment>
<comment type="catalytic activity">
    <reaction evidence="2">
        <text>Na(+)(in) = Na(+)(out)</text>
        <dbReference type="Rhea" id="RHEA:34963"/>
        <dbReference type="ChEBI" id="CHEBI:29101"/>
    </reaction>
</comment>
<comment type="activity regulation">
    <text evidence="2">Has high sensitivity to ATP. Fast activation by external ATP. Exhibits rapid desensitization. Sensitives to the ATP agonist:alpha/beta-methylene-ATP. Subject to allosteric inhibition by AF-219. Mg(2+) and Ca(2+) slow deactivation of P2RX3.</text>
</comment>
<comment type="subunit">
    <text evidence="1 2">Homotrimer (By similarity). Forms heterotrimer with P2RX2. Heterotrimeric P2RX2/3 has a ligand dose-response profile that is distinct from either homotrimeric P2RX2 or P2RX3.</text>
</comment>
<comment type="subcellular location">
    <subcellularLocation>
        <location evidence="2">Cell membrane</location>
        <topology evidence="2">Multi-pass membrane protein</topology>
    </subcellularLocation>
    <text evidence="1">Localizes to neuronal cell body of sensory neurons.</text>
</comment>
<comment type="domain">
    <text evidence="2">Contains extracellular allosteric binding sites-distinct from the orthosteric binding site.</text>
</comment>
<comment type="disruption phenotype">
    <text evidence="3 4 5 6">Mice deficient in P2rx3 lose the rapidly desensitizing ATP-induced currents in dorsal root ganglion neurons. P2rx3 deficiency also causes a reduction in the sustained ATP-induced currents in nodose ganglion neurons. P2rx3-null mice have reduced pain-related behavior in response to injection of ATP and formalin. Significantly, P2rx3-null mice exhibit a marked urinary bladder hyporeflexia, characterized by decreased voiding frequency and increased bladder capacity, but normal bladder pressure (PubMed:11069181, PubMed:11466438). Simultaneous knockout of P2rx2 and P2rx3 results in reduced pain-related behaviors in response to intraplantar injection of formalin and reduced urinary bladder reflexes and decreased pelvic afferent nerve activity in response to bladder distension. Neurons have minimal to no response to ATP (PubMed:15961431). Simultaneous knockout of P2rx2 and P2rx3 results in defects in taste responses in the taste nerves and reduced behavioral responses to sweeteners, glutamate and bitter substances (PubMed:16322458).</text>
</comment>
<comment type="similarity">
    <text evidence="7">Belongs to the P2X receptor family.</text>
</comment>
<sequence length="397" mass="44437">MNCISDFFTYETTKSVVVKSWTIGIINRAVQLLIISYFVGWVFLHEKAYQVRDTAIESSVVTKVKGFGRYANRVMDVSDYVTPPQGTSVFVIITKMIVTENQMQGFCPENEEKYRCVSDSQCGPERFPGGGILTGRCVNYSSVRRTCEIQGWCPTEVDTVEMPIMMEAENFTIFIKNSIRFPLFNFEKGNLLPNLTDKDIKKCRFHPEKAPFCPILRVGDVVKFAGQDFAKLARTGGVLGIKIGWVCDLDKAWDQCIPKYSFTRLDGVSEKSSVSPGYNFRFAKYYKMENGSEYRTLLKAFGIRFDVLVYGNAGKFNIIPTIISSVAAFTSVGVGTVLCDIILLNFLKGADHYKARKFEEVTETTLKGTASTNPVFTSDQATVEKQSTDSGAYSIGH</sequence>